<gene>
    <name evidence="2" type="primary">atpA</name>
    <name type="ordered locus">Ta0004</name>
</gene>
<sequence>MGKIIRISGPVVVAEDVEDAKMYDVVKVGEMGLIGEIIKIEGNRSTIQVYEDTAGIRPDEKVENTRRPLSVELGPGILKSIYDGIQRPLDVIKITSGDFIARGLNPPALDRQKKWEFVPAVKKGETVFPGQILGTVQETSLITHRIMVPEGISGKVTMIADGEHRVEDVIATVSGNGKSYDIQMMTTWPVRKARRVQRKLPPEIPLVTGQRVIDALFPVAKGGTAAVPGPFGSGKCVSGDTPVLLDAGERRIGDLFMEAIQDQKNAVEIGQNEEIVRLHDPLRIYSMVGSEIVESVSHAIYHGKSNAIVTVRTENGREVRVTPVHKLFVKIGNSVIERPASEVNEGDEIACASVSENGDSQTVTTTLVLTFDRVVSKEMHSGVFDVYDLMVPDYGYNFIGGNGLIVLHNTVIQHQLAKWSDANIVVYIGCGERGNEMTEILTTFPELKDPNTGQPLMDRTVLIANTSNMPVAAREASIYTGITIAEYYRDMGYDVALMADSTSRWAEALREISGRLEEMPGEEGYPAYLGRRVSEFYERSGRARLVSPDERYGSITVIGAVSPPGGDISEPVSQNTLRVTRVFWALDAALANRRHFPSINWLNSYSLYTEDLRSWYDKNVSSEWSALRERAMEILQRESELQEVAQLVGYDAMPEKEKSILDVARIIREDFLQQSAFDEIDAYCSLKKQYLMLKAIMEIDTYQNKALDSGATMDNLASLAVREKLSRMKIVPEAQVESYYNDLVEEIHKEYGNFIGEKNAEASL</sequence>
<keyword id="KW-0066">ATP synthesis</keyword>
<keyword id="KW-0067">ATP-binding</keyword>
<keyword id="KW-0068">Autocatalytic cleavage</keyword>
<keyword id="KW-1003">Cell membrane</keyword>
<keyword id="KW-0375">Hydrogen ion transport</keyword>
<keyword id="KW-0406">Ion transport</keyword>
<keyword id="KW-0472">Membrane</keyword>
<keyword id="KW-0547">Nucleotide-binding</keyword>
<keyword id="KW-0651">Protein splicing</keyword>
<keyword id="KW-1185">Reference proteome</keyword>
<keyword id="KW-1278">Translocase</keyword>
<keyword id="KW-0813">Transport</keyword>
<proteinExistence type="evidence at transcript level"/>
<feature type="chain" id="PRO_0000002470" description="A-type ATP synthase subunit A, 1st part" evidence="1">
    <location>
        <begin position="1"/>
        <end position="235"/>
    </location>
</feature>
<feature type="chain" id="PRO_0000002471" description="Tac AtpA intein" evidence="1">
    <location>
        <begin position="236"/>
        <end position="409"/>
    </location>
</feature>
<feature type="chain" id="PRO_0000002472" description="A-type ATP synthase subunit A, 2nd part" evidence="1">
    <location>
        <begin position="410"/>
        <end position="764"/>
    </location>
</feature>
<feature type="sequence conflict" description="In Ref. 1; CAB99208/AAF88065." evidence="3" ref="1">
    <original>PPEI</original>
    <variation>LSRD</variation>
    <location>
        <begin position="201"/>
        <end position="204"/>
    </location>
</feature>
<feature type="sequence conflict" description="In Ref. 1; CAB99208." evidence="3" ref="1">
    <original>GQRVIDAL</original>
    <variation>AQSGNRCA</variation>
    <location>
        <begin position="209"/>
        <end position="216"/>
    </location>
</feature>
<feature type="sequence conflict" description="In Ref. 1; CAB99208/AAF88065." evidence="3" ref="1">
    <original>KGGTAA</original>
    <variation>EAANCR</variation>
    <location>
        <begin position="221"/>
        <end position="226"/>
    </location>
</feature>
<feature type="sequence conflict" description="In Ref. 1; CAB99208/AAF88065." evidence="3" ref="1">
    <original>QDQKNAV</original>
    <variation>RPKERG</variation>
    <location>
        <begin position="261"/>
        <end position="267"/>
    </location>
</feature>
<feature type="sequence conflict" description="In Ref. 1; CAB99208/AAF88065." evidence="3" ref="1">
    <original>PL</original>
    <variation>SW</variation>
    <location>
        <begin position="281"/>
        <end position="282"/>
    </location>
</feature>
<feature type="sequence conflict" description="In Ref. 1; CAB99208/AAF88065/BAB00608." evidence="3" ref="1">
    <original>S</original>
    <variation>T</variation>
    <location>
        <position position="295"/>
    </location>
</feature>
<feature type="sequence conflict" description="In Ref. 1; CAB99208/AAF88065/BAB00608." evidence="3" ref="1">
    <original>T</original>
    <variation>N</variation>
    <location>
        <position position="310"/>
    </location>
</feature>
<feature type="sequence conflict" description="In Ref. 1; CAB99208/AAF88065." evidence="3" ref="1">
    <original>CA</original>
    <variation>WP</variation>
    <location>
        <begin position="351"/>
        <end position="352"/>
    </location>
</feature>
<feature type="sequence conflict" description="In Ref. 1; CAB99208/AAF88065." evidence="3" ref="1">
    <original>DRTVL</original>
    <variation>TGLSF</variation>
    <location>
        <begin position="458"/>
        <end position="462"/>
    </location>
</feature>
<comment type="function">
    <text evidence="2">Component of the A-type ATP synthase that produces ATP from ADP in the presence of a proton gradient across the membrane. The A chain is the catalytic subunit.</text>
</comment>
<comment type="catalytic activity">
    <reaction evidence="2">
        <text>ATP + H2O + 4 H(+)(in) = ADP + phosphate + 5 H(+)(out)</text>
        <dbReference type="Rhea" id="RHEA:57720"/>
        <dbReference type="ChEBI" id="CHEBI:15377"/>
        <dbReference type="ChEBI" id="CHEBI:15378"/>
        <dbReference type="ChEBI" id="CHEBI:30616"/>
        <dbReference type="ChEBI" id="CHEBI:43474"/>
        <dbReference type="ChEBI" id="CHEBI:456216"/>
        <dbReference type="EC" id="7.1.2.2"/>
    </reaction>
</comment>
<comment type="subunit">
    <text evidence="2">Has multiple subunits with at least A(3), B(3), C, D, E, F, H, I and proteolipid K(x).</text>
</comment>
<comment type="subcellular location">
    <subcellularLocation>
        <location evidence="2">Cell membrane</location>
        <topology evidence="2">Peripheral membrane protein</topology>
    </subcellularLocation>
</comment>
<comment type="PTM">
    <text evidence="3">This protein undergoes a protein self splicing that involves a post-translational excision of the VDE intervening region (intein) followed by peptide ligation.</text>
</comment>
<comment type="miscellaneous">
    <text>The intein interrupts the ATP-binding site.</text>
</comment>
<comment type="similarity">
    <text evidence="2">Belongs to the ATPase alpha/beta chains family.</text>
</comment>
<protein>
    <recommendedName>
        <fullName evidence="2">A-type ATP synthase subunit A</fullName>
        <ecNumber evidence="2">7.1.2.2</ecNumber>
    </recommendedName>
    <component>
        <recommendedName>
            <fullName>Tac AtpA intein</fullName>
        </recommendedName>
        <alternativeName>
            <fullName>Tac VMA intein</fullName>
        </alternativeName>
    </component>
</protein>
<organism>
    <name type="scientific">Thermoplasma acidophilum (strain ATCC 25905 / DSM 1728 / JCM 9062 / NBRC 15155 / AMRC-C165)</name>
    <dbReference type="NCBI Taxonomy" id="273075"/>
    <lineage>
        <taxon>Archaea</taxon>
        <taxon>Methanobacteriati</taxon>
        <taxon>Thermoplasmatota</taxon>
        <taxon>Thermoplasmata</taxon>
        <taxon>Thermoplasmatales</taxon>
        <taxon>Thermoplasmataceae</taxon>
        <taxon>Thermoplasma</taxon>
    </lineage>
</organism>
<accession>Q9P997</accession>
<accession>Q9HM65</accession>
<name>AATA_THEAC</name>
<dbReference type="EC" id="7.1.2.2" evidence="2"/>
<dbReference type="EMBL" id="AJ292523">
    <property type="protein sequence ID" value="CAB99208.1"/>
    <property type="molecule type" value="mRNA"/>
</dbReference>
<dbReference type="EMBL" id="AF286477">
    <property type="protein sequence ID" value="AAF88065.1"/>
    <property type="molecule type" value="mRNA"/>
</dbReference>
<dbReference type="EMBL" id="AB045977">
    <property type="protein sequence ID" value="BAB00608.1"/>
    <property type="molecule type" value="mRNA"/>
</dbReference>
<dbReference type="EMBL" id="AL445063">
    <property type="protein sequence ID" value="CAC11153.1"/>
    <property type="molecule type" value="Genomic_DNA"/>
</dbReference>
<dbReference type="RefSeq" id="WP_010900431.1">
    <property type="nucleotide sequence ID" value="NC_002578.1"/>
</dbReference>
<dbReference type="SMR" id="Q9P997"/>
<dbReference type="FunCoup" id="Q9P997">
    <property type="interactions" value="150"/>
</dbReference>
<dbReference type="STRING" id="273075.gene:9571219"/>
<dbReference type="PaxDb" id="273075-Ta0004"/>
<dbReference type="EnsemblBacteria" id="CAC11153">
    <property type="protein sequence ID" value="CAC11153"/>
    <property type="gene ID" value="CAC11153"/>
</dbReference>
<dbReference type="KEGG" id="tac:Ta0004"/>
<dbReference type="eggNOG" id="arCOG00868">
    <property type="taxonomic scope" value="Archaea"/>
</dbReference>
<dbReference type="HOGENOM" id="CLU_008162_1_1_2"/>
<dbReference type="InParanoid" id="Q9P997"/>
<dbReference type="OrthoDB" id="115235at2157"/>
<dbReference type="Proteomes" id="UP000001024">
    <property type="component" value="Chromosome"/>
</dbReference>
<dbReference type="GO" id="GO:0005886">
    <property type="term" value="C:plasma membrane"/>
    <property type="evidence" value="ECO:0007669"/>
    <property type="project" value="UniProtKB-SubCell"/>
</dbReference>
<dbReference type="GO" id="GO:0005524">
    <property type="term" value="F:ATP binding"/>
    <property type="evidence" value="ECO:0007669"/>
    <property type="project" value="UniProtKB-UniRule"/>
</dbReference>
<dbReference type="GO" id="GO:0046933">
    <property type="term" value="F:proton-transporting ATP synthase activity, rotational mechanism"/>
    <property type="evidence" value="ECO:0007669"/>
    <property type="project" value="UniProtKB-UniRule"/>
</dbReference>
<dbReference type="GO" id="GO:0046961">
    <property type="term" value="F:proton-transporting ATPase activity, rotational mechanism"/>
    <property type="evidence" value="ECO:0007669"/>
    <property type="project" value="InterPro"/>
</dbReference>
<dbReference type="GO" id="GO:0016539">
    <property type="term" value="P:intein-mediated protein splicing"/>
    <property type="evidence" value="ECO:0007669"/>
    <property type="project" value="InterPro"/>
</dbReference>
<dbReference type="GO" id="GO:0042777">
    <property type="term" value="P:proton motive force-driven plasma membrane ATP synthesis"/>
    <property type="evidence" value="ECO:0007669"/>
    <property type="project" value="UniProtKB-UniRule"/>
</dbReference>
<dbReference type="CDD" id="cd18111">
    <property type="entry name" value="ATP-synt_V_A-type_alpha_C"/>
    <property type="match status" value="1"/>
</dbReference>
<dbReference type="CDD" id="cd18119">
    <property type="entry name" value="ATP-synt_V_A-type_alpha_N"/>
    <property type="match status" value="1"/>
</dbReference>
<dbReference type="CDD" id="cd00081">
    <property type="entry name" value="Hint"/>
    <property type="match status" value="1"/>
</dbReference>
<dbReference type="CDD" id="cd01134">
    <property type="entry name" value="V_A-ATPase_A"/>
    <property type="match status" value="1"/>
</dbReference>
<dbReference type="FunFam" id="2.40.30.20:FF:000002">
    <property type="entry name" value="V-type proton ATPase catalytic subunit A"/>
    <property type="match status" value="1"/>
</dbReference>
<dbReference type="FunFam" id="2.40.50.100:FF:000008">
    <property type="entry name" value="V-type proton ATPase catalytic subunit A"/>
    <property type="match status" value="1"/>
</dbReference>
<dbReference type="Gene3D" id="2.40.30.20">
    <property type="match status" value="1"/>
</dbReference>
<dbReference type="Gene3D" id="2.40.50.100">
    <property type="match status" value="1"/>
</dbReference>
<dbReference type="Gene3D" id="1.10.1140.10">
    <property type="entry name" value="Bovine Mitochondrial F1-atpase, Atp Synthase Beta Chain, Chain D, domain 3"/>
    <property type="match status" value="1"/>
</dbReference>
<dbReference type="Gene3D" id="2.170.16.10">
    <property type="entry name" value="Hedgehog/Intein (Hint) domain"/>
    <property type="match status" value="1"/>
</dbReference>
<dbReference type="Gene3D" id="3.40.50.300">
    <property type="entry name" value="P-loop containing nucleotide triphosphate hydrolases"/>
    <property type="match status" value="2"/>
</dbReference>
<dbReference type="HAMAP" id="MF_00309">
    <property type="entry name" value="ATP_synth_A_arch"/>
    <property type="match status" value="1"/>
</dbReference>
<dbReference type="InterPro" id="IPR055190">
    <property type="entry name" value="ATP-synt_VA_C"/>
</dbReference>
<dbReference type="InterPro" id="IPR031686">
    <property type="entry name" value="ATP-synth_a_Xtn"/>
</dbReference>
<dbReference type="InterPro" id="IPR023366">
    <property type="entry name" value="ATP_synth_asu-like_sf"/>
</dbReference>
<dbReference type="InterPro" id="IPR020003">
    <property type="entry name" value="ATPase_a/bsu_AS"/>
</dbReference>
<dbReference type="InterPro" id="IPR004100">
    <property type="entry name" value="ATPase_F1/V1/A1_a/bsu_N"/>
</dbReference>
<dbReference type="InterPro" id="IPR036121">
    <property type="entry name" value="ATPase_F1/V1/A1_a/bsu_N_sf"/>
</dbReference>
<dbReference type="InterPro" id="IPR000194">
    <property type="entry name" value="ATPase_F1/V1/A1_a/bsu_nucl-bd"/>
</dbReference>
<dbReference type="InterPro" id="IPR024034">
    <property type="entry name" value="ATPase_F1/V1_b/a_C"/>
</dbReference>
<dbReference type="InterPro" id="IPR003586">
    <property type="entry name" value="Hint_dom_C"/>
</dbReference>
<dbReference type="InterPro" id="IPR003587">
    <property type="entry name" value="Hint_dom_N"/>
</dbReference>
<dbReference type="InterPro" id="IPR036844">
    <property type="entry name" value="Hint_dom_sf"/>
</dbReference>
<dbReference type="InterPro" id="IPR030934">
    <property type="entry name" value="Intein_C"/>
</dbReference>
<dbReference type="InterPro" id="IPR006141">
    <property type="entry name" value="Intein_N"/>
</dbReference>
<dbReference type="InterPro" id="IPR027417">
    <property type="entry name" value="P-loop_NTPase"/>
</dbReference>
<dbReference type="InterPro" id="IPR022878">
    <property type="entry name" value="V-ATPase_asu"/>
</dbReference>
<dbReference type="NCBIfam" id="TIGR01443">
    <property type="entry name" value="intein_Cterm"/>
    <property type="match status" value="1"/>
</dbReference>
<dbReference type="NCBIfam" id="TIGR01445">
    <property type="entry name" value="intein_Nterm"/>
    <property type="match status" value="1"/>
</dbReference>
<dbReference type="NCBIfam" id="NF003220">
    <property type="entry name" value="PRK04192.1"/>
    <property type="match status" value="1"/>
</dbReference>
<dbReference type="PANTHER" id="PTHR43607:SF1">
    <property type="entry name" value="H(+)-TRANSPORTING TWO-SECTOR ATPASE"/>
    <property type="match status" value="1"/>
</dbReference>
<dbReference type="PANTHER" id="PTHR43607">
    <property type="entry name" value="V-TYPE PROTON ATPASE CATALYTIC SUBUNIT A"/>
    <property type="match status" value="1"/>
</dbReference>
<dbReference type="Pfam" id="PF00006">
    <property type="entry name" value="ATP-synt_ab"/>
    <property type="match status" value="1"/>
</dbReference>
<dbReference type="Pfam" id="PF02874">
    <property type="entry name" value="ATP-synt_ab_N"/>
    <property type="match status" value="1"/>
</dbReference>
<dbReference type="Pfam" id="PF16886">
    <property type="entry name" value="ATP-synt_ab_Xtn"/>
    <property type="match status" value="1"/>
</dbReference>
<dbReference type="Pfam" id="PF22919">
    <property type="entry name" value="ATP-synt_VA_C"/>
    <property type="match status" value="1"/>
</dbReference>
<dbReference type="Pfam" id="PF14890">
    <property type="entry name" value="Intein_splicing"/>
    <property type="match status" value="1"/>
</dbReference>
<dbReference type="SMART" id="SM00305">
    <property type="entry name" value="HintC"/>
    <property type="match status" value="1"/>
</dbReference>
<dbReference type="SMART" id="SM00306">
    <property type="entry name" value="HintN"/>
    <property type="match status" value="1"/>
</dbReference>
<dbReference type="SUPFAM" id="SSF47917">
    <property type="entry name" value="C-terminal domain of alpha and beta subunits of F1 ATP synthase"/>
    <property type="match status" value="1"/>
</dbReference>
<dbReference type="SUPFAM" id="SSF51294">
    <property type="entry name" value="Hedgehog/intein (Hint) domain"/>
    <property type="match status" value="1"/>
</dbReference>
<dbReference type="SUPFAM" id="SSF50615">
    <property type="entry name" value="N-terminal domain of alpha and beta subunits of F1 ATP synthase"/>
    <property type="match status" value="1"/>
</dbReference>
<dbReference type="SUPFAM" id="SSF52540">
    <property type="entry name" value="P-loop containing nucleoside triphosphate hydrolases"/>
    <property type="match status" value="2"/>
</dbReference>
<dbReference type="PROSITE" id="PS00152">
    <property type="entry name" value="ATPASE_ALPHA_BETA"/>
    <property type="match status" value="1"/>
</dbReference>
<dbReference type="PROSITE" id="PS50818">
    <property type="entry name" value="INTEIN_C_TER"/>
    <property type="match status" value="1"/>
</dbReference>
<dbReference type="PROSITE" id="PS50817">
    <property type="entry name" value="INTEIN_N_TER"/>
    <property type="match status" value="1"/>
</dbReference>
<evidence type="ECO:0000255" key="1"/>
<evidence type="ECO:0000255" key="2">
    <source>
        <dbReference type="HAMAP-Rule" id="MF_00309"/>
    </source>
</evidence>
<evidence type="ECO:0000305" key="3"/>
<reference key="1">
    <citation type="journal article" date="2001" name="BMC Biochem.">
        <title>The intein of the Thermoplasma A-ATPase A subunit: structure, evolution and expression in E. coli.</title>
        <authorList>
            <person name="Senejani A.G."/>
            <person name="Hilario E."/>
            <person name="Gogarten J.P."/>
        </authorList>
    </citation>
    <scope>NUCLEOTIDE SEQUENCE [MRNA]</scope>
</reference>
<reference key="2">
    <citation type="journal article" date="2000" name="Nature">
        <title>The genome sequence of the thermoacidophilic scavenger Thermoplasma acidophilum.</title>
        <authorList>
            <person name="Ruepp A."/>
            <person name="Graml W."/>
            <person name="Santos-Martinez M.-L."/>
            <person name="Koretke K.K."/>
            <person name="Volker C."/>
            <person name="Mewes H.-W."/>
            <person name="Frishman D."/>
            <person name="Stocker S."/>
            <person name="Lupas A.N."/>
            <person name="Baumeister W."/>
        </authorList>
    </citation>
    <scope>NUCLEOTIDE SEQUENCE [LARGE SCALE GENOMIC DNA]</scope>
    <source>
        <strain>ATCC 25905 / DSM 1728 / JCM 9062 / NBRC 15155 / AMRC-C165</strain>
    </source>
</reference>